<dbReference type="EC" id="3.6.1.-"/>
<dbReference type="EC" id="3.6.1.77" evidence="1"/>
<dbReference type="EMBL" id="BC087364">
    <property type="protein sequence ID" value="AAH87364.1"/>
    <property type="molecule type" value="mRNA"/>
</dbReference>
<dbReference type="RefSeq" id="NP_001088716.1">
    <property type="nucleotide sequence ID" value="NM_001095247.1"/>
</dbReference>
<dbReference type="BioGRID" id="106060">
    <property type="interactions" value="2"/>
</dbReference>
<dbReference type="DNASU" id="495980"/>
<dbReference type="GeneID" id="495980"/>
<dbReference type="KEGG" id="xla:495980"/>
<dbReference type="AGR" id="Xenbase:XB-GENE-5839228"/>
<dbReference type="CTD" id="495980"/>
<dbReference type="Xenbase" id="XB-GENE-5839228">
    <property type="gene designation" value="nudt19.L"/>
</dbReference>
<dbReference type="OrthoDB" id="1695362at2759"/>
<dbReference type="Proteomes" id="UP000186698">
    <property type="component" value="Chromosome 4L"/>
</dbReference>
<dbReference type="Bgee" id="495980">
    <property type="expression patterns" value="Expressed in muscle tissue and 20 other cell types or tissues"/>
</dbReference>
<dbReference type="GO" id="GO:0005739">
    <property type="term" value="C:mitochondrion"/>
    <property type="evidence" value="ECO:0007669"/>
    <property type="project" value="TreeGrafter"/>
</dbReference>
<dbReference type="GO" id="GO:0005777">
    <property type="term" value="C:peroxisome"/>
    <property type="evidence" value="ECO:0007669"/>
    <property type="project" value="UniProtKB-SubCell"/>
</dbReference>
<dbReference type="GO" id="GO:0010945">
    <property type="term" value="F:coenzyme A diphosphatase activity"/>
    <property type="evidence" value="ECO:0007669"/>
    <property type="project" value="RHEA"/>
</dbReference>
<dbReference type="GO" id="GO:0000287">
    <property type="term" value="F:magnesium ion binding"/>
    <property type="evidence" value="ECO:0000250"/>
    <property type="project" value="UniProtKB"/>
</dbReference>
<dbReference type="GO" id="GO:0044580">
    <property type="term" value="P:butyryl-CoA catabolic process"/>
    <property type="evidence" value="ECO:0000250"/>
    <property type="project" value="UniProtKB"/>
</dbReference>
<dbReference type="GO" id="GO:0015938">
    <property type="term" value="P:coenzyme A catabolic process"/>
    <property type="evidence" value="ECO:0000250"/>
    <property type="project" value="UniProtKB"/>
</dbReference>
<dbReference type="GO" id="GO:2001294">
    <property type="term" value="P:malonyl-CoA catabolic process"/>
    <property type="evidence" value="ECO:0000250"/>
    <property type="project" value="UniProtKB"/>
</dbReference>
<dbReference type="GO" id="GO:0036114">
    <property type="term" value="P:medium-chain fatty-acyl-CoA catabolic process"/>
    <property type="evidence" value="ECO:0000250"/>
    <property type="project" value="UniProtKB"/>
</dbReference>
<dbReference type="GO" id="GO:1902858">
    <property type="term" value="P:propionyl-CoA metabolic process"/>
    <property type="evidence" value="ECO:0000250"/>
    <property type="project" value="UniProtKB"/>
</dbReference>
<dbReference type="GO" id="GO:1901289">
    <property type="term" value="P:succinyl-CoA catabolic process"/>
    <property type="evidence" value="ECO:0000250"/>
    <property type="project" value="UniProtKB"/>
</dbReference>
<dbReference type="CDD" id="cd18870">
    <property type="entry name" value="NUDIX_AcylCoAdiphos_Nudt19"/>
    <property type="match status" value="1"/>
</dbReference>
<dbReference type="Gene3D" id="3.90.79.10">
    <property type="entry name" value="Nucleoside Triphosphate Pyrophosphohydrolase"/>
    <property type="match status" value="1"/>
</dbReference>
<dbReference type="InterPro" id="IPR015797">
    <property type="entry name" value="NUDIX_hydrolase-like_dom_sf"/>
</dbReference>
<dbReference type="InterPro" id="IPR000086">
    <property type="entry name" value="NUDIX_hydrolase_dom"/>
</dbReference>
<dbReference type="InterPro" id="IPR039121">
    <property type="entry name" value="NUDT19"/>
</dbReference>
<dbReference type="PANTHER" id="PTHR12318:SF0">
    <property type="entry name" value="ACYL-COENZYME A DIPHOSPHATASE NUDT19"/>
    <property type="match status" value="1"/>
</dbReference>
<dbReference type="PANTHER" id="PTHR12318">
    <property type="entry name" value="TESTOSTERONE-REGULATED PROTEIN RP2"/>
    <property type="match status" value="1"/>
</dbReference>
<dbReference type="SUPFAM" id="SSF55811">
    <property type="entry name" value="Nudix"/>
    <property type="match status" value="1"/>
</dbReference>
<dbReference type="PROSITE" id="PS51462">
    <property type="entry name" value="NUDIX"/>
    <property type="match status" value="1"/>
</dbReference>
<evidence type="ECO:0000250" key="1">
    <source>
        <dbReference type="UniProtKB" id="P11930"/>
    </source>
</evidence>
<evidence type="ECO:0000255" key="2"/>
<evidence type="ECO:0000255" key="3">
    <source>
        <dbReference type="PROSITE-ProRule" id="PRU00794"/>
    </source>
</evidence>
<evidence type="ECO:0000305" key="4"/>
<protein>
    <recommendedName>
        <fullName>Acyl-coenzyme A diphosphatase NUDT19</fullName>
        <ecNumber>3.6.1.-</ecNumber>
        <ecNumber evidence="1">3.6.1.77</ecNumber>
    </recommendedName>
    <alternativeName>
        <fullName>Nucleoside diphosphate-linked moiety X motif 19</fullName>
        <shortName>Nudix motif 19</shortName>
    </alternativeName>
</protein>
<sequence length="380" mass="43762">MNNTLKYWKEAATLIVAARTSHGHFPYIQPQVQFPNQQNNTSDYEVLLLKRSQKSGFMPNAFVFPGGNIESSDFSSDWIKVFSRYEQKPNFGLGLVKQLDNRSPMFTADSSKFGSLIPGEVATRICAIRETFEESGILLVVPENFNSEDNQHLVEVTDQDKEKLSKWREEVQRNPSQFIQMCKEMRCMPNIWALKEWSNWLTPVISQGVKSRRFDTAFFICCLNAKPAVSDDNKEVTSFKWWTPTEALEDYKSHKIWIPPPQFYELSRLCHFAPINELHKFIVNRSLEGCERWMPVIAQCEDGIVHTLPGDDLYPEDPDLTGEKQTVVCSNETIENLIQKGGRFHRLVLIDGKPTLLVNIKPKYKHINPLTIESESKNKL</sequence>
<name>NUD19_XENLA</name>
<comment type="function">
    <text evidence="1">Fatty acyl-coenzyme A (CoA) diphosphatase that hydrolyzes fatty acyl-CoA to yield acyl-4'-phosphopantetheine and adenosine 3',5'-bisphosphate (By similarity). Mediates the hydrolysis of a wide range of CoA esters, including choloyl-CoA and branched-chain fatty-acyl-CoA esters and at low substrate concentrations medium and long-chain fatty-acyl-CoA esters are the primary substrates (By similarity). Highest activity seen with medium-chain acyl-CoA esters and higher rates of activity seen with the unsaturated acyl-CoA esters compared with the saturated esters (By similarity). Exhibits decapping activity towards dpCoA-capped RNAs in vitro (By similarity).</text>
</comment>
<comment type="catalytic activity">
    <reaction evidence="1">
        <text>an acyl-CoA + H2O = an acyl-4'-phosphopantetheine + adenosine 3',5'-bisphosphate + 2 H(+)</text>
        <dbReference type="Rhea" id="RHEA:50044"/>
        <dbReference type="ChEBI" id="CHEBI:15377"/>
        <dbReference type="ChEBI" id="CHEBI:15378"/>
        <dbReference type="ChEBI" id="CHEBI:58342"/>
        <dbReference type="ChEBI" id="CHEBI:58343"/>
        <dbReference type="ChEBI" id="CHEBI:132023"/>
    </reaction>
    <physiologicalReaction direction="left-to-right" evidence="1">
        <dbReference type="Rhea" id="RHEA:50045"/>
    </physiologicalReaction>
</comment>
<comment type="catalytic activity">
    <reaction evidence="1">
        <text>CoA + H2O = (R)-4'-phosphopantetheine + adenosine 3',5'-bisphosphate + 2 H(+)</text>
        <dbReference type="Rhea" id="RHEA:64988"/>
        <dbReference type="ChEBI" id="CHEBI:15377"/>
        <dbReference type="ChEBI" id="CHEBI:15378"/>
        <dbReference type="ChEBI" id="CHEBI:57287"/>
        <dbReference type="ChEBI" id="CHEBI:58343"/>
        <dbReference type="ChEBI" id="CHEBI:61723"/>
        <dbReference type="EC" id="3.6.1.77"/>
    </reaction>
    <physiologicalReaction direction="left-to-right" evidence="1">
        <dbReference type="Rhea" id="RHEA:64989"/>
    </physiologicalReaction>
</comment>
<comment type="catalytic activity">
    <reaction evidence="1">
        <text>hexanoyl-CoA + H2O = hexanoyl-4'-phosphopantetheine + adenosine 3',5'-bisphosphate + 2 H(+)</text>
        <dbReference type="Rhea" id="RHEA:49980"/>
        <dbReference type="ChEBI" id="CHEBI:15377"/>
        <dbReference type="ChEBI" id="CHEBI:15378"/>
        <dbReference type="ChEBI" id="CHEBI:58343"/>
        <dbReference type="ChEBI" id="CHEBI:62620"/>
        <dbReference type="ChEBI" id="CHEBI:132012"/>
    </reaction>
    <physiologicalReaction direction="left-to-right" evidence="1">
        <dbReference type="Rhea" id="RHEA:49981"/>
    </physiologicalReaction>
</comment>
<comment type="catalytic activity">
    <reaction evidence="1">
        <text>octanoyl-CoA + H2O = S-octanoyl-4'-phosphopantetheine + adenosine 3',5'-bisphosphate + 2 H(+)</text>
        <dbReference type="Rhea" id="RHEA:50016"/>
        <dbReference type="ChEBI" id="CHEBI:15377"/>
        <dbReference type="ChEBI" id="CHEBI:15378"/>
        <dbReference type="ChEBI" id="CHEBI:57386"/>
        <dbReference type="ChEBI" id="CHEBI:58343"/>
        <dbReference type="ChEBI" id="CHEBI:132013"/>
    </reaction>
    <physiologicalReaction direction="left-to-right" evidence="1">
        <dbReference type="Rhea" id="RHEA:50017"/>
    </physiologicalReaction>
</comment>
<comment type="catalytic activity">
    <reaction evidence="1">
        <text>butanoyl-CoA + H2O = S-butanoyl-4'-phosphopantetheine + adenosine 3',5'-bisphosphate + 2 H(+)</text>
        <dbReference type="Rhea" id="RHEA:49976"/>
        <dbReference type="ChEBI" id="CHEBI:15377"/>
        <dbReference type="ChEBI" id="CHEBI:15378"/>
        <dbReference type="ChEBI" id="CHEBI:57371"/>
        <dbReference type="ChEBI" id="CHEBI:58343"/>
        <dbReference type="ChEBI" id="CHEBI:132011"/>
    </reaction>
    <physiologicalReaction direction="left-to-right" evidence="1">
        <dbReference type="Rhea" id="RHEA:49977"/>
    </physiologicalReaction>
</comment>
<comment type="catalytic activity">
    <reaction evidence="1">
        <text>propanoyl-CoA + H2O = propanoyl-4'-phosphopantetheine + adenosine 3',5'-bisphosphate + 2 H(+)</text>
        <dbReference type="Rhea" id="RHEA:67464"/>
        <dbReference type="ChEBI" id="CHEBI:15377"/>
        <dbReference type="ChEBI" id="CHEBI:15378"/>
        <dbReference type="ChEBI" id="CHEBI:57392"/>
        <dbReference type="ChEBI" id="CHEBI:58343"/>
        <dbReference type="ChEBI" id="CHEBI:172362"/>
    </reaction>
    <physiologicalReaction direction="left-to-right" evidence="1">
        <dbReference type="Rhea" id="RHEA:67465"/>
    </physiologicalReaction>
</comment>
<comment type="catalytic activity">
    <reaction evidence="1">
        <text>malonyl-CoA + H2O = malonyl-4'-phosphopantetheine + adenosine 3',5'-bisphosphate + 2 H(+)</text>
        <dbReference type="Rhea" id="RHEA:67468"/>
        <dbReference type="ChEBI" id="CHEBI:15377"/>
        <dbReference type="ChEBI" id="CHEBI:15378"/>
        <dbReference type="ChEBI" id="CHEBI:57384"/>
        <dbReference type="ChEBI" id="CHEBI:58343"/>
        <dbReference type="ChEBI" id="CHEBI:172363"/>
    </reaction>
    <physiologicalReaction direction="left-to-right" evidence="1">
        <dbReference type="Rhea" id="RHEA:67469"/>
    </physiologicalReaction>
</comment>
<comment type="catalytic activity">
    <reaction evidence="1">
        <text>succinyl-CoA + H2O = succinyl-4'-phosphopantetheine + adenosine 3',5'-bisphosphate + 2 H(+)</text>
        <dbReference type="Rhea" id="RHEA:67472"/>
        <dbReference type="ChEBI" id="CHEBI:15377"/>
        <dbReference type="ChEBI" id="CHEBI:15378"/>
        <dbReference type="ChEBI" id="CHEBI:57292"/>
        <dbReference type="ChEBI" id="CHEBI:58343"/>
        <dbReference type="ChEBI" id="CHEBI:172364"/>
    </reaction>
    <physiologicalReaction direction="left-to-right" evidence="1">
        <dbReference type="Rhea" id="RHEA:67473"/>
    </physiologicalReaction>
</comment>
<comment type="catalytic activity">
    <reaction evidence="1">
        <text>choloyl-CoA + H2O = S-choloyl-4'-phosphopantetheine + adenosine 3',5'-bisphosphate + 2 H(+)</text>
        <dbReference type="Rhea" id="RHEA:50036"/>
        <dbReference type="ChEBI" id="CHEBI:15377"/>
        <dbReference type="ChEBI" id="CHEBI:15378"/>
        <dbReference type="ChEBI" id="CHEBI:57373"/>
        <dbReference type="ChEBI" id="CHEBI:58343"/>
        <dbReference type="ChEBI" id="CHEBI:132020"/>
    </reaction>
    <physiologicalReaction direction="left-to-right" evidence="1">
        <dbReference type="Rhea" id="RHEA:50037"/>
    </physiologicalReaction>
</comment>
<comment type="catalytic activity">
    <reaction evidence="1">
        <text>4,8-dimethylnonanoyl-CoA + H2O = S-(4,8-dimethylnonanoyl)-4'-phosphopantetheine + adenosine 3',5'-bisphosphate + 2 H(+)</text>
        <dbReference type="Rhea" id="RHEA:67524"/>
        <dbReference type="ChEBI" id="CHEBI:15377"/>
        <dbReference type="ChEBI" id="CHEBI:15378"/>
        <dbReference type="ChEBI" id="CHEBI:58343"/>
        <dbReference type="ChEBI" id="CHEBI:77061"/>
        <dbReference type="ChEBI" id="CHEBI:172385"/>
    </reaction>
    <physiologicalReaction direction="left-to-right" evidence="1">
        <dbReference type="Rhea" id="RHEA:67525"/>
    </physiologicalReaction>
</comment>
<comment type="catalytic activity">
    <reaction evidence="1">
        <text>(9Z,12Z,15Z)-octadecatrienoyl-CoA + H2O = S-(9Z,12Z,15Z-octadecatrienoyl)-4'-phosphopantetheine + adenosine 3',5'-bisphosphate + 2 H(+)</text>
        <dbReference type="Rhea" id="RHEA:67532"/>
        <dbReference type="ChEBI" id="CHEBI:15377"/>
        <dbReference type="ChEBI" id="CHEBI:15378"/>
        <dbReference type="ChEBI" id="CHEBI:58343"/>
        <dbReference type="ChEBI" id="CHEBI:74034"/>
        <dbReference type="ChEBI" id="CHEBI:172386"/>
    </reaction>
    <physiologicalReaction direction="left-to-right" evidence="1">
        <dbReference type="Rhea" id="RHEA:67533"/>
    </physiologicalReaction>
</comment>
<comment type="catalytic activity">
    <reaction evidence="1">
        <text>(9Z,12Z)-octadecadienoyl-CoA + H2O = S-(9Z,12Z-octadecadienoyl)-4'-phosphopantetheine + adenosine 3',5'-bisphosphate + 2 H(+)</text>
        <dbReference type="Rhea" id="RHEA:67536"/>
        <dbReference type="ChEBI" id="CHEBI:15377"/>
        <dbReference type="ChEBI" id="CHEBI:15378"/>
        <dbReference type="ChEBI" id="CHEBI:57383"/>
        <dbReference type="ChEBI" id="CHEBI:58343"/>
        <dbReference type="ChEBI" id="CHEBI:172387"/>
    </reaction>
    <physiologicalReaction direction="left-to-right" evidence="1">
        <dbReference type="Rhea" id="RHEA:67537"/>
    </physiologicalReaction>
</comment>
<comment type="catalytic activity">
    <reaction evidence="1">
        <text>(9Z)-hexadecenoyl-CoA + H2O = S-(9Z-hexadecenoyl)-4'-phosphopantetheine + adenosine 3',5'-bisphosphate + 2 H(+)</text>
        <dbReference type="Rhea" id="RHEA:67540"/>
        <dbReference type="ChEBI" id="CHEBI:15377"/>
        <dbReference type="ChEBI" id="CHEBI:15378"/>
        <dbReference type="ChEBI" id="CHEBI:58343"/>
        <dbReference type="ChEBI" id="CHEBI:61540"/>
        <dbReference type="ChEBI" id="CHEBI:172388"/>
    </reaction>
    <physiologicalReaction direction="left-to-right" evidence="1">
        <dbReference type="Rhea" id="RHEA:67541"/>
    </physiologicalReaction>
</comment>
<comment type="catalytic activity">
    <reaction evidence="1">
        <text>(9Z)-tetradecenoyl-CoA + H2O = S-(9Z-tetradecenoyl)-4'-phosphopantetheine + adenosine 3',5'-bisphosphate + 2 H(+)</text>
        <dbReference type="Rhea" id="RHEA:67544"/>
        <dbReference type="ChEBI" id="CHEBI:15377"/>
        <dbReference type="ChEBI" id="CHEBI:15378"/>
        <dbReference type="ChEBI" id="CHEBI:58343"/>
        <dbReference type="ChEBI" id="CHEBI:65060"/>
        <dbReference type="ChEBI" id="CHEBI:172389"/>
    </reaction>
    <physiologicalReaction direction="left-to-right" evidence="1">
        <dbReference type="Rhea" id="RHEA:67545"/>
    </physiologicalReaction>
</comment>
<comment type="catalytic activity">
    <reaction evidence="1">
        <text>(6Z)-octenoyl-CoA + H2O = S-(6Z-octenoyl)-4'-phosphopantetheine + adenosine 3',5'-bisphosphate + 2 H(+)</text>
        <dbReference type="Rhea" id="RHEA:67528"/>
        <dbReference type="ChEBI" id="CHEBI:15377"/>
        <dbReference type="ChEBI" id="CHEBI:15378"/>
        <dbReference type="ChEBI" id="CHEBI:58343"/>
        <dbReference type="ChEBI" id="CHEBI:172383"/>
        <dbReference type="ChEBI" id="CHEBI:172384"/>
    </reaction>
    <physiologicalReaction direction="left-to-right" evidence="1">
        <dbReference type="Rhea" id="RHEA:67529"/>
    </physiologicalReaction>
</comment>
<comment type="catalytic activity">
    <reaction evidence="1">
        <text>hexadecanoyl-CoA + H2O = S-hexadecanoyl-4'-phosphopantetheine + adenosine 3',5'-bisphosphate + 2 H(+)</text>
        <dbReference type="Rhea" id="RHEA:50032"/>
        <dbReference type="ChEBI" id="CHEBI:15377"/>
        <dbReference type="ChEBI" id="CHEBI:15378"/>
        <dbReference type="ChEBI" id="CHEBI:57379"/>
        <dbReference type="ChEBI" id="CHEBI:58343"/>
        <dbReference type="ChEBI" id="CHEBI:132018"/>
    </reaction>
    <physiologicalReaction direction="left-to-right" evidence="1">
        <dbReference type="Rhea" id="RHEA:50033"/>
    </physiologicalReaction>
</comment>
<comment type="catalytic activity">
    <reaction evidence="1">
        <text>tetradecanoyl-CoA + H2O = tetradecanoyl-4'-phosphopantetheine + adenosine 3',5'-bisphosphate + 2 H(+)</text>
        <dbReference type="Rhea" id="RHEA:50028"/>
        <dbReference type="ChEBI" id="CHEBI:15377"/>
        <dbReference type="ChEBI" id="CHEBI:15378"/>
        <dbReference type="ChEBI" id="CHEBI:57385"/>
        <dbReference type="ChEBI" id="CHEBI:58343"/>
        <dbReference type="ChEBI" id="CHEBI:132017"/>
    </reaction>
    <physiologicalReaction direction="left-to-right" evidence="1">
        <dbReference type="Rhea" id="RHEA:50029"/>
    </physiologicalReaction>
</comment>
<comment type="catalytic activity">
    <reaction evidence="1">
        <text>dodecanoyl-CoA + H2O = S-dodecanoyl-4'-phosphopantetheine + adenosine 3',5'-bisphosphate + 2 H(+)</text>
        <dbReference type="Rhea" id="RHEA:50024"/>
        <dbReference type="ChEBI" id="CHEBI:15377"/>
        <dbReference type="ChEBI" id="CHEBI:15378"/>
        <dbReference type="ChEBI" id="CHEBI:57375"/>
        <dbReference type="ChEBI" id="CHEBI:58343"/>
        <dbReference type="ChEBI" id="CHEBI:132015"/>
    </reaction>
    <physiologicalReaction direction="left-to-right" evidence="1">
        <dbReference type="Rhea" id="RHEA:50025"/>
    </physiologicalReaction>
</comment>
<comment type="catalytic activity">
    <reaction evidence="1">
        <text>a 5'-end CoA-ribonucleoside in mRNA + H2O = a 5'-end phospho-adenosine-phospho-ribonucleoside in mRNA + (R)-4'-phosphopantetheine + 2 H(+)</text>
        <dbReference type="Rhea" id="RHEA:67592"/>
        <dbReference type="Rhea" id="RHEA-COMP:15719"/>
        <dbReference type="Rhea" id="RHEA-COMP:17276"/>
        <dbReference type="ChEBI" id="CHEBI:15377"/>
        <dbReference type="ChEBI" id="CHEBI:15378"/>
        <dbReference type="ChEBI" id="CHEBI:61723"/>
        <dbReference type="ChEBI" id="CHEBI:144051"/>
        <dbReference type="ChEBI" id="CHEBI:172371"/>
    </reaction>
    <physiologicalReaction direction="left-to-right" evidence="1">
        <dbReference type="Rhea" id="RHEA:67593"/>
    </physiologicalReaction>
</comment>
<comment type="cofactor">
    <cofactor evidence="1">
        <name>Mg(2+)</name>
        <dbReference type="ChEBI" id="CHEBI:18420"/>
    </cofactor>
    <cofactor evidence="1">
        <name>Mn(2+)</name>
        <dbReference type="ChEBI" id="CHEBI:29035"/>
    </cofactor>
</comment>
<comment type="subunit">
    <text evidence="1">Monomer.</text>
</comment>
<comment type="subcellular location">
    <subcellularLocation>
        <location evidence="1">Peroxisome</location>
    </subcellularLocation>
</comment>
<comment type="similarity">
    <text evidence="4">Belongs to the Nudix hydrolase family.</text>
</comment>
<organism>
    <name type="scientific">Xenopus laevis</name>
    <name type="common">African clawed frog</name>
    <dbReference type="NCBI Taxonomy" id="8355"/>
    <lineage>
        <taxon>Eukaryota</taxon>
        <taxon>Metazoa</taxon>
        <taxon>Chordata</taxon>
        <taxon>Craniata</taxon>
        <taxon>Vertebrata</taxon>
        <taxon>Euteleostomi</taxon>
        <taxon>Amphibia</taxon>
        <taxon>Batrachia</taxon>
        <taxon>Anura</taxon>
        <taxon>Pipoidea</taxon>
        <taxon>Pipidae</taxon>
        <taxon>Xenopodinae</taxon>
        <taxon>Xenopus</taxon>
        <taxon>Xenopus</taxon>
    </lineage>
</organism>
<keyword id="KW-0378">Hydrolase</keyword>
<keyword id="KW-0460">Magnesium</keyword>
<keyword id="KW-0464">Manganese</keyword>
<keyword id="KW-0479">Metal-binding</keyword>
<keyword id="KW-0576">Peroxisome</keyword>
<keyword id="KW-1185">Reference proteome</keyword>
<accession>Q5PQ50</accession>
<gene>
    <name type="primary">nudt19</name>
</gene>
<proteinExistence type="evidence at transcript level"/>
<feature type="chain" id="PRO_0000324576" description="Acyl-coenzyme A diphosphatase NUDT19">
    <location>
        <begin position="1"/>
        <end position="380"/>
    </location>
</feature>
<feature type="domain" description="Nudix hydrolase" evidence="3">
    <location>
        <begin position="8"/>
        <end position="264"/>
    </location>
</feature>
<feature type="short sequence motif" description="Nudix box">
    <location>
        <begin position="115"/>
        <end position="136"/>
    </location>
</feature>
<feature type="short sequence motif" description="Microbody targeting signal" evidence="2">
    <location>
        <begin position="378"/>
        <end position="380"/>
    </location>
</feature>
<feature type="binding site" evidence="1">
    <location>
        <position position="130"/>
    </location>
    <ligand>
        <name>Mg(2+)</name>
        <dbReference type="ChEBI" id="CHEBI:18420"/>
    </ligand>
</feature>
<feature type="binding site" evidence="1">
    <location>
        <position position="134"/>
    </location>
    <ligand>
        <name>Mg(2+)</name>
        <dbReference type="ChEBI" id="CHEBI:18420"/>
    </ligand>
</feature>
<feature type="site" description="Important for coenzyme A binding" evidence="1">
    <location>
        <position position="51"/>
    </location>
</feature>
<feature type="site" description="Important for coenzyme A binding" evidence="1">
    <location>
        <position position="57"/>
    </location>
</feature>
<feature type="site" description="Important for coenzyme A binding" evidence="1">
    <location>
        <position position="212"/>
    </location>
</feature>
<reference key="1">
    <citation type="submission" date="2004-12" db="EMBL/GenBank/DDBJ databases">
        <authorList>
            <consortium name="NIH - Xenopus Gene Collection (XGC) project"/>
        </authorList>
    </citation>
    <scope>NUCLEOTIDE SEQUENCE [LARGE SCALE MRNA]</scope>
    <source>
        <tissue>Testis</tissue>
    </source>
</reference>